<proteinExistence type="inferred from homology"/>
<protein>
    <recommendedName>
        <fullName evidence="1">Anamorsin homolog</fullName>
    </recommendedName>
    <alternativeName>
        <fullName evidence="1">Fe-S cluster assembly protein DRE2 homolog</fullName>
    </alternativeName>
</protein>
<sequence length="274" mass="29287">MDRTRKQCSVLAFTDDAVLPVSTIVNAVRELGNEGAEQCDPQVVTQASSLSKLPVDSSSMDIVISICRSLQFQGDFLFEEISRVLKPGGTVLIYKTLQSVAEGTSEAVLALERKLLLAGFLEAQGLQLNSLELSGLDHSFGMKAKKPSWKIGSSFALKKSTKGSVKVNLDDDLIDEDSLLTEEDMKKPPIAPGGDCEVGSTRKACKNCTCGRAEAEEKVKLGPTMEQLNNPQSACGSCGLGDAFRCSTCPYKGLPPFKLGEKVSLSGNFLAADI</sequence>
<accession>B9RBT0</accession>
<organism>
    <name type="scientific">Ricinus communis</name>
    <name type="common">Castor bean</name>
    <dbReference type="NCBI Taxonomy" id="3988"/>
    <lineage>
        <taxon>Eukaryota</taxon>
        <taxon>Viridiplantae</taxon>
        <taxon>Streptophyta</taxon>
        <taxon>Embryophyta</taxon>
        <taxon>Tracheophyta</taxon>
        <taxon>Spermatophyta</taxon>
        <taxon>Magnoliopsida</taxon>
        <taxon>eudicotyledons</taxon>
        <taxon>Gunneridae</taxon>
        <taxon>Pentapetalae</taxon>
        <taxon>rosids</taxon>
        <taxon>fabids</taxon>
        <taxon>Malpighiales</taxon>
        <taxon>Euphorbiaceae</taxon>
        <taxon>Acalyphoideae</taxon>
        <taxon>Acalypheae</taxon>
        <taxon>Ricinus</taxon>
    </lineage>
</organism>
<gene>
    <name type="ORF">RCOM_1680640</name>
</gene>
<name>DRE2_RICCO</name>
<reference key="1">
    <citation type="journal article" date="2010" name="Nat. Biotechnol.">
        <title>Draft genome sequence of the oilseed species Ricinus communis.</title>
        <authorList>
            <person name="Chan A.P."/>
            <person name="Crabtree J."/>
            <person name="Zhao Q."/>
            <person name="Lorenzi H."/>
            <person name="Orvis J."/>
            <person name="Puiu D."/>
            <person name="Melake-Berhan A."/>
            <person name="Jones K.M."/>
            <person name="Redman J."/>
            <person name="Chen G."/>
            <person name="Cahoon E.B."/>
            <person name="Gedil M."/>
            <person name="Stanke M."/>
            <person name="Haas B.J."/>
            <person name="Wortman J.R."/>
            <person name="Fraser-Liggett C.M."/>
            <person name="Ravel J."/>
            <person name="Rabinowicz P.D."/>
        </authorList>
    </citation>
    <scope>NUCLEOTIDE SEQUENCE [LARGE SCALE GENOMIC DNA]</scope>
    <source>
        <strain>cv. Hale</strain>
    </source>
</reference>
<comment type="function">
    <text evidence="1">Component of the cytosolic iron-sulfur (Fe-S) protein assembly (CIA) machinery. Required for the maturation of extramitochondrial Fe-S proteins. Part of an electron transfer chain functioning in an early step of cytosolic Fe-S biogenesis, facilitating the de novo assembly of a [4Fe-4S] cluster on the cytosolic Fe-S scaffold complex. Electrons are transferred from NADPH via a FAD- and FMN-containing diflavin oxidoreductase. Together with the diflavin oxidoreductase, also required for the assembly of the diferric tyrosyl radical cofactor of ribonucleotide reductase (RNR), probably by providing electrons for reduction during radical cofactor maturation in the catalytic small subunit.</text>
</comment>
<comment type="cofactor">
    <cofactor evidence="1">
        <name>[2Fe-2S] cluster</name>
        <dbReference type="ChEBI" id="CHEBI:190135"/>
    </cofactor>
</comment>
<comment type="cofactor">
    <cofactor evidence="1">
        <name>[4Fe-4S] cluster</name>
        <dbReference type="ChEBI" id="CHEBI:49883"/>
    </cofactor>
</comment>
<comment type="subunit">
    <text evidence="1">Monomer.</text>
</comment>
<comment type="subcellular location">
    <subcellularLocation>
        <location evidence="1">Cytoplasm</location>
    </subcellularLocation>
    <subcellularLocation>
        <location evidence="1">Mitochondrion intermembrane space</location>
    </subcellularLocation>
</comment>
<comment type="domain">
    <text evidence="1">The C-terminal domain binds 2 Fe-S clusters but is otherwise mostly in an intrinsically disordered conformation.</text>
</comment>
<comment type="domain">
    <text evidence="1">The N-terminal domain has structural similarity with S-adenosyl-L-methionine-dependent methyltransferases, but does not bind S-adenosyl-L-methionine. It is required for correct assembly of the 2 Fe-S clusters.</text>
</comment>
<comment type="domain">
    <text evidence="1">The twin Cx2C motifs are involved in the recognition by the mitochondrial MIA40-ERV1 disulfide relay system. The formation of 2 disulfide bonds in the Cx2C motifs through dithiol/disulfide exchange reactions effectively traps the protein in the mitochondrial intermembrane space.</text>
</comment>
<comment type="similarity">
    <text evidence="1">Belongs to the anamorsin family.</text>
</comment>
<feature type="chain" id="PRO_0000392347" description="Anamorsin homolog">
    <location>
        <begin position="1"/>
        <end position="274"/>
    </location>
</feature>
<feature type="region of interest" description="N-terminal SAM-like domain" evidence="1">
    <location>
        <begin position="1"/>
        <end position="154"/>
    </location>
</feature>
<feature type="region of interest" description="Linker" evidence="1">
    <location>
        <begin position="154"/>
        <end position="185"/>
    </location>
</feature>
<feature type="region of interest" description="Fe-S binding site A" evidence="1">
    <location>
        <begin position="196"/>
        <end position="210"/>
    </location>
</feature>
<feature type="region of interest" description="Fe-S binding site B" evidence="1">
    <location>
        <begin position="235"/>
        <end position="249"/>
    </location>
</feature>
<feature type="short sequence motif" description="Cx2C motif 1" evidence="1">
    <location>
        <begin position="235"/>
        <end position="238"/>
    </location>
</feature>
<feature type="short sequence motif" description="Cx2C motif 2" evidence="1">
    <location>
        <begin position="246"/>
        <end position="249"/>
    </location>
</feature>
<feature type="binding site" evidence="1">
    <location>
        <position position="196"/>
    </location>
    <ligand>
        <name>[2Fe-2S] cluster</name>
        <dbReference type="ChEBI" id="CHEBI:190135"/>
    </ligand>
</feature>
<feature type="binding site" evidence="1">
    <location>
        <position position="205"/>
    </location>
    <ligand>
        <name>[2Fe-2S] cluster</name>
        <dbReference type="ChEBI" id="CHEBI:190135"/>
    </ligand>
</feature>
<feature type="binding site" evidence="1">
    <location>
        <position position="208"/>
    </location>
    <ligand>
        <name>[2Fe-2S] cluster</name>
        <dbReference type="ChEBI" id="CHEBI:190135"/>
    </ligand>
</feature>
<feature type="binding site" evidence="1">
    <location>
        <position position="210"/>
    </location>
    <ligand>
        <name>[2Fe-2S] cluster</name>
        <dbReference type="ChEBI" id="CHEBI:190135"/>
    </ligand>
</feature>
<feature type="binding site" evidence="1">
    <location>
        <position position="235"/>
    </location>
    <ligand>
        <name>[4Fe-4S] cluster</name>
        <dbReference type="ChEBI" id="CHEBI:49883"/>
    </ligand>
</feature>
<feature type="binding site" evidence="1">
    <location>
        <position position="238"/>
    </location>
    <ligand>
        <name>[4Fe-4S] cluster</name>
        <dbReference type="ChEBI" id="CHEBI:49883"/>
    </ligand>
</feature>
<feature type="binding site" evidence="1">
    <location>
        <position position="246"/>
    </location>
    <ligand>
        <name>[4Fe-4S] cluster</name>
        <dbReference type="ChEBI" id="CHEBI:49883"/>
    </ligand>
</feature>
<feature type="binding site" evidence="1">
    <location>
        <position position="249"/>
    </location>
    <ligand>
        <name>[4Fe-4S] cluster</name>
        <dbReference type="ChEBI" id="CHEBI:49883"/>
    </ligand>
</feature>
<dbReference type="EMBL" id="EQ973774">
    <property type="protein sequence ID" value="EEF51001.1"/>
    <property type="molecule type" value="Genomic_DNA"/>
</dbReference>
<dbReference type="RefSeq" id="XP_002509614.1">
    <property type="nucleotide sequence ID" value="XM_002509568.2"/>
</dbReference>
<dbReference type="RefSeq" id="XP_015579249.1">
    <property type="nucleotide sequence ID" value="XM_015723763.1"/>
</dbReference>
<dbReference type="RefSeq" id="XP_015579326.1">
    <property type="nucleotide sequence ID" value="XM_015723840.1"/>
</dbReference>
<dbReference type="FunCoup" id="B9RBT0">
    <property type="interactions" value="2986"/>
</dbReference>
<dbReference type="STRING" id="3988.B9RBT0"/>
<dbReference type="eggNOG" id="KOG4020">
    <property type="taxonomic scope" value="Eukaryota"/>
</dbReference>
<dbReference type="InParanoid" id="B9RBT0"/>
<dbReference type="Proteomes" id="UP000008311">
    <property type="component" value="Unassembled WGS sequence"/>
</dbReference>
<dbReference type="GO" id="GO:0005737">
    <property type="term" value="C:cytoplasm"/>
    <property type="evidence" value="ECO:0000318"/>
    <property type="project" value="GO_Central"/>
</dbReference>
<dbReference type="GO" id="GO:0005758">
    <property type="term" value="C:mitochondrial intermembrane space"/>
    <property type="evidence" value="ECO:0007669"/>
    <property type="project" value="UniProtKB-SubCell"/>
</dbReference>
<dbReference type="GO" id="GO:0051537">
    <property type="term" value="F:2 iron, 2 sulfur cluster binding"/>
    <property type="evidence" value="ECO:0007669"/>
    <property type="project" value="UniProtKB-UniRule"/>
</dbReference>
<dbReference type="GO" id="GO:0051539">
    <property type="term" value="F:4 iron, 4 sulfur cluster binding"/>
    <property type="evidence" value="ECO:0007669"/>
    <property type="project" value="UniProtKB-KW"/>
</dbReference>
<dbReference type="GO" id="GO:0009055">
    <property type="term" value="F:electron transfer activity"/>
    <property type="evidence" value="ECO:0007669"/>
    <property type="project" value="UniProtKB-UniRule"/>
</dbReference>
<dbReference type="GO" id="GO:0046872">
    <property type="term" value="F:metal ion binding"/>
    <property type="evidence" value="ECO:0007669"/>
    <property type="project" value="UniProtKB-KW"/>
</dbReference>
<dbReference type="GO" id="GO:0016226">
    <property type="term" value="P:iron-sulfur cluster assembly"/>
    <property type="evidence" value="ECO:0000318"/>
    <property type="project" value="GO_Central"/>
</dbReference>
<dbReference type="Gene3D" id="3.40.50.150">
    <property type="entry name" value="Vaccinia Virus protein VP39"/>
    <property type="match status" value="1"/>
</dbReference>
<dbReference type="HAMAP" id="MF_03115">
    <property type="entry name" value="Anamorsin"/>
    <property type="match status" value="1"/>
</dbReference>
<dbReference type="InterPro" id="IPR007785">
    <property type="entry name" value="Anamorsin"/>
</dbReference>
<dbReference type="InterPro" id="IPR049011">
    <property type="entry name" value="Anamorsin_N_metazoan"/>
</dbReference>
<dbReference type="InterPro" id="IPR046408">
    <property type="entry name" value="CIAPIN1"/>
</dbReference>
<dbReference type="InterPro" id="IPR029063">
    <property type="entry name" value="SAM-dependent_MTases_sf"/>
</dbReference>
<dbReference type="PANTHER" id="PTHR13273">
    <property type="entry name" value="ANAMORSIN"/>
    <property type="match status" value="1"/>
</dbReference>
<dbReference type="PANTHER" id="PTHR13273:SF14">
    <property type="entry name" value="ANAMORSIN"/>
    <property type="match status" value="1"/>
</dbReference>
<dbReference type="Pfam" id="PF20922">
    <property type="entry name" value="Anamorsin_N"/>
    <property type="match status" value="1"/>
</dbReference>
<dbReference type="Pfam" id="PF05093">
    <property type="entry name" value="CIAPIN1"/>
    <property type="match status" value="1"/>
</dbReference>
<dbReference type="SUPFAM" id="SSF53335">
    <property type="entry name" value="S-adenosyl-L-methionine-dependent methyltransferases"/>
    <property type="match status" value="1"/>
</dbReference>
<evidence type="ECO:0000255" key="1">
    <source>
        <dbReference type="HAMAP-Rule" id="MF_03115"/>
    </source>
</evidence>
<keyword id="KW-0001">2Fe-2S</keyword>
<keyword id="KW-0004">4Fe-4S</keyword>
<keyword id="KW-0963">Cytoplasm</keyword>
<keyword id="KW-0408">Iron</keyword>
<keyword id="KW-0411">Iron-sulfur</keyword>
<keyword id="KW-0479">Metal-binding</keyword>
<keyword id="KW-0496">Mitochondrion</keyword>
<keyword id="KW-1185">Reference proteome</keyword>